<sequence length="89" mass="10461">MAYTTEVKKELISKFKVHDADTGSPEVQIALLTHRITYLTEHVKVHKKDHHSRRGLLILVGKRRKLLNYVKNKDVNRYRDIISTLGLRR</sequence>
<evidence type="ECO:0000255" key="1">
    <source>
        <dbReference type="HAMAP-Rule" id="MF_01343"/>
    </source>
</evidence>
<evidence type="ECO:0000305" key="2"/>
<reference key="1">
    <citation type="submission" date="2007-10" db="EMBL/GenBank/DDBJ databases">
        <title>Complete sequence of Desulfococcus oleovorans Hxd3.</title>
        <authorList>
            <consortium name="US DOE Joint Genome Institute"/>
            <person name="Copeland A."/>
            <person name="Lucas S."/>
            <person name="Lapidus A."/>
            <person name="Barry K."/>
            <person name="Glavina del Rio T."/>
            <person name="Dalin E."/>
            <person name="Tice H."/>
            <person name="Pitluck S."/>
            <person name="Kiss H."/>
            <person name="Brettin T."/>
            <person name="Bruce D."/>
            <person name="Detter J.C."/>
            <person name="Han C."/>
            <person name="Schmutz J."/>
            <person name="Larimer F."/>
            <person name="Land M."/>
            <person name="Hauser L."/>
            <person name="Kyrpides N."/>
            <person name="Kim E."/>
            <person name="Wawrik B."/>
            <person name="Richardson P."/>
        </authorList>
    </citation>
    <scope>NUCLEOTIDE SEQUENCE [LARGE SCALE GENOMIC DNA]</scope>
    <source>
        <strain>DSM 6200 / JCM 39069 / Hxd3</strain>
    </source>
</reference>
<organism>
    <name type="scientific">Desulfosudis oleivorans (strain DSM 6200 / JCM 39069 / Hxd3)</name>
    <name type="common">Desulfococcus oleovorans</name>
    <dbReference type="NCBI Taxonomy" id="96561"/>
    <lineage>
        <taxon>Bacteria</taxon>
        <taxon>Pseudomonadati</taxon>
        <taxon>Thermodesulfobacteriota</taxon>
        <taxon>Desulfobacteria</taxon>
        <taxon>Desulfobacterales</taxon>
        <taxon>Desulfosudaceae</taxon>
        <taxon>Desulfosudis</taxon>
    </lineage>
</organism>
<comment type="function">
    <text evidence="1">One of the primary rRNA binding proteins, it binds directly to 16S rRNA where it helps nucleate assembly of the platform of the 30S subunit by binding and bridging several RNA helices of the 16S rRNA.</text>
</comment>
<comment type="function">
    <text evidence="1">Forms an intersubunit bridge (bridge B4) with the 23S rRNA of the 50S subunit in the ribosome.</text>
</comment>
<comment type="subunit">
    <text evidence="1">Part of the 30S ribosomal subunit. Forms a bridge to the 50S subunit in the 70S ribosome, contacting the 23S rRNA.</text>
</comment>
<comment type="similarity">
    <text evidence="1">Belongs to the universal ribosomal protein uS15 family.</text>
</comment>
<protein>
    <recommendedName>
        <fullName evidence="1">Small ribosomal subunit protein uS15</fullName>
    </recommendedName>
    <alternativeName>
        <fullName evidence="2">30S ribosomal protein S15</fullName>
    </alternativeName>
</protein>
<gene>
    <name evidence="1" type="primary">rpsO</name>
    <name type="ordered locus">Dole_3030</name>
</gene>
<dbReference type="EMBL" id="CP000859">
    <property type="protein sequence ID" value="ABW68833.1"/>
    <property type="molecule type" value="Genomic_DNA"/>
</dbReference>
<dbReference type="RefSeq" id="WP_012176444.1">
    <property type="nucleotide sequence ID" value="NC_009943.1"/>
</dbReference>
<dbReference type="SMR" id="A8ZZ60"/>
<dbReference type="STRING" id="96561.Dole_3030"/>
<dbReference type="KEGG" id="dol:Dole_3030"/>
<dbReference type="eggNOG" id="COG0184">
    <property type="taxonomic scope" value="Bacteria"/>
</dbReference>
<dbReference type="HOGENOM" id="CLU_148518_0_0_7"/>
<dbReference type="OrthoDB" id="9799262at2"/>
<dbReference type="Proteomes" id="UP000008561">
    <property type="component" value="Chromosome"/>
</dbReference>
<dbReference type="GO" id="GO:0022627">
    <property type="term" value="C:cytosolic small ribosomal subunit"/>
    <property type="evidence" value="ECO:0007669"/>
    <property type="project" value="TreeGrafter"/>
</dbReference>
<dbReference type="GO" id="GO:0019843">
    <property type="term" value="F:rRNA binding"/>
    <property type="evidence" value="ECO:0007669"/>
    <property type="project" value="UniProtKB-UniRule"/>
</dbReference>
<dbReference type="GO" id="GO:0003735">
    <property type="term" value="F:structural constituent of ribosome"/>
    <property type="evidence" value="ECO:0007669"/>
    <property type="project" value="InterPro"/>
</dbReference>
<dbReference type="GO" id="GO:0006412">
    <property type="term" value="P:translation"/>
    <property type="evidence" value="ECO:0007669"/>
    <property type="project" value="UniProtKB-UniRule"/>
</dbReference>
<dbReference type="CDD" id="cd00353">
    <property type="entry name" value="Ribosomal_S15p_S13e"/>
    <property type="match status" value="1"/>
</dbReference>
<dbReference type="FunFam" id="1.10.287.10:FF:000002">
    <property type="entry name" value="30S ribosomal protein S15"/>
    <property type="match status" value="1"/>
</dbReference>
<dbReference type="Gene3D" id="6.10.250.3130">
    <property type="match status" value="1"/>
</dbReference>
<dbReference type="Gene3D" id="1.10.287.10">
    <property type="entry name" value="S15/NS1, RNA-binding"/>
    <property type="match status" value="1"/>
</dbReference>
<dbReference type="HAMAP" id="MF_01343_B">
    <property type="entry name" value="Ribosomal_uS15_B"/>
    <property type="match status" value="1"/>
</dbReference>
<dbReference type="InterPro" id="IPR000589">
    <property type="entry name" value="Ribosomal_uS15"/>
</dbReference>
<dbReference type="InterPro" id="IPR005290">
    <property type="entry name" value="Ribosomal_uS15_bac-type"/>
</dbReference>
<dbReference type="InterPro" id="IPR009068">
    <property type="entry name" value="uS15_NS1_RNA-bd_sf"/>
</dbReference>
<dbReference type="NCBIfam" id="TIGR00952">
    <property type="entry name" value="S15_bact"/>
    <property type="match status" value="1"/>
</dbReference>
<dbReference type="PANTHER" id="PTHR23321">
    <property type="entry name" value="RIBOSOMAL PROTEIN S15, BACTERIAL AND ORGANELLAR"/>
    <property type="match status" value="1"/>
</dbReference>
<dbReference type="PANTHER" id="PTHR23321:SF26">
    <property type="entry name" value="SMALL RIBOSOMAL SUBUNIT PROTEIN US15M"/>
    <property type="match status" value="1"/>
</dbReference>
<dbReference type="Pfam" id="PF00312">
    <property type="entry name" value="Ribosomal_S15"/>
    <property type="match status" value="1"/>
</dbReference>
<dbReference type="SMART" id="SM01387">
    <property type="entry name" value="Ribosomal_S15"/>
    <property type="match status" value="1"/>
</dbReference>
<dbReference type="SUPFAM" id="SSF47060">
    <property type="entry name" value="S15/NS1 RNA-binding domain"/>
    <property type="match status" value="1"/>
</dbReference>
<dbReference type="PROSITE" id="PS00362">
    <property type="entry name" value="RIBOSOMAL_S15"/>
    <property type="match status" value="1"/>
</dbReference>
<keyword id="KW-1185">Reference proteome</keyword>
<keyword id="KW-0687">Ribonucleoprotein</keyword>
<keyword id="KW-0689">Ribosomal protein</keyword>
<keyword id="KW-0694">RNA-binding</keyword>
<keyword id="KW-0699">rRNA-binding</keyword>
<feature type="chain" id="PRO_1000143104" description="Small ribosomal subunit protein uS15">
    <location>
        <begin position="1"/>
        <end position="89"/>
    </location>
</feature>
<name>RS15_DESOH</name>
<proteinExistence type="inferred from homology"/>
<accession>A8ZZ60</accession>